<sequence>MAAELEYESVLCVKPDVSVYRIPPRASNRGYRASDWKLDQPDWTGRLRITSKGKIAYIKLEDKVSGELFAQAPVEQYPGIAVETVADSSRYFVIRIQDGTGRSAFIGIGFTDRGDAFDFNVSLQDHFKWVKQETEISKESQEMDSRPKLDLGFKEGQTIKLSIGNITAKKGGTSKPRASGTGGLSLLPPPPGGKVTIPPPSSSVAISNHVTPPPIPKSNHGSNDSDILLDLDSPAPVPTSAPAPAPASTSNDLWGDFSTASSSVPNQAPQPSNWVQF</sequence>
<evidence type="ECO:0000250" key="1"/>
<evidence type="ECO:0000250" key="2">
    <source>
        <dbReference type="UniProtKB" id="Q8NC96"/>
    </source>
</evidence>
<evidence type="ECO:0000256" key="3">
    <source>
        <dbReference type="SAM" id="MobiDB-lite"/>
    </source>
</evidence>
<evidence type="ECO:0000269" key="4">
    <source>
    </source>
</evidence>
<evidence type="ECO:0000269" key="5">
    <source>
    </source>
</evidence>
<evidence type="ECO:0000305" key="6"/>
<accession>P69682</accession>
<accession>Q4QR67</accession>
<reference key="1">
    <citation type="journal article" date="2004" name="Nature">
        <title>Genome sequence of the Brown Norway rat yields insights into mammalian evolution.</title>
        <authorList>
            <person name="Gibbs R.A."/>
            <person name="Weinstock G.M."/>
            <person name="Metzker M.L."/>
            <person name="Muzny D.M."/>
            <person name="Sodergren E.J."/>
            <person name="Scherer S."/>
            <person name="Scott G."/>
            <person name="Steffen D."/>
            <person name="Worley K.C."/>
            <person name="Burch P.E."/>
            <person name="Okwuonu G."/>
            <person name="Hines S."/>
            <person name="Lewis L."/>
            <person name="Deramo C."/>
            <person name="Delgado O."/>
            <person name="Dugan-Rocha S."/>
            <person name="Miner G."/>
            <person name="Morgan M."/>
            <person name="Hawes A."/>
            <person name="Gill R."/>
            <person name="Holt R.A."/>
            <person name="Adams M.D."/>
            <person name="Amanatides P.G."/>
            <person name="Baden-Tillson H."/>
            <person name="Barnstead M."/>
            <person name="Chin S."/>
            <person name="Evans C.A."/>
            <person name="Ferriera S."/>
            <person name="Fosler C."/>
            <person name="Glodek A."/>
            <person name="Gu Z."/>
            <person name="Jennings D."/>
            <person name="Kraft C.L."/>
            <person name="Nguyen T."/>
            <person name="Pfannkoch C.M."/>
            <person name="Sitter C."/>
            <person name="Sutton G.G."/>
            <person name="Venter J.C."/>
            <person name="Woodage T."/>
            <person name="Smith D."/>
            <person name="Lee H.-M."/>
            <person name="Gustafson E."/>
            <person name="Cahill P."/>
            <person name="Kana A."/>
            <person name="Doucette-Stamm L."/>
            <person name="Weinstock K."/>
            <person name="Fechtel K."/>
            <person name="Weiss R.B."/>
            <person name="Dunn D.M."/>
            <person name="Green E.D."/>
            <person name="Blakesley R.W."/>
            <person name="Bouffard G.G."/>
            <person name="De Jong P.J."/>
            <person name="Osoegawa K."/>
            <person name="Zhu B."/>
            <person name="Marra M."/>
            <person name="Schein J."/>
            <person name="Bosdet I."/>
            <person name="Fjell C."/>
            <person name="Jones S."/>
            <person name="Krzywinski M."/>
            <person name="Mathewson C."/>
            <person name="Siddiqui A."/>
            <person name="Wye N."/>
            <person name="McPherson J."/>
            <person name="Zhao S."/>
            <person name="Fraser C.M."/>
            <person name="Shetty J."/>
            <person name="Shatsman S."/>
            <person name="Geer K."/>
            <person name="Chen Y."/>
            <person name="Abramzon S."/>
            <person name="Nierman W.C."/>
            <person name="Havlak P.H."/>
            <person name="Chen R."/>
            <person name="Durbin K.J."/>
            <person name="Egan A."/>
            <person name="Ren Y."/>
            <person name="Song X.-Z."/>
            <person name="Li B."/>
            <person name="Liu Y."/>
            <person name="Qin X."/>
            <person name="Cawley S."/>
            <person name="Cooney A.J."/>
            <person name="D'Souza L.M."/>
            <person name="Martin K."/>
            <person name="Wu J.Q."/>
            <person name="Gonzalez-Garay M.L."/>
            <person name="Jackson A.R."/>
            <person name="Kalafus K.J."/>
            <person name="McLeod M.P."/>
            <person name="Milosavljevic A."/>
            <person name="Virk D."/>
            <person name="Volkov A."/>
            <person name="Wheeler D.A."/>
            <person name="Zhang Z."/>
            <person name="Bailey J.A."/>
            <person name="Eichler E.E."/>
            <person name="Tuzun E."/>
            <person name="Birney E."/>
            <person name="Mongin E."/>
            <person name="Ureta-Vidal A."/>
            <person name="Woodwark C."/>
            <person name="Zdobnov E."/>
            <person name="Bork P."/>
            <person name="Suyama M."/>
            <person name="Torrents D."/>
            <person name="Alexandersson M."/>
            <person name="Trask B.J."/>
            <person name="Young J.M."/>
            <person name="Huang H."/>
            <person name="Wang H."/>
            <person name="Xing H."/>
            <person name="Daniels S."/>
            <person name="Gietzen D."/>
            <person name="Schmidt J."/>
            <person name="Stevens K."/>
            <person name="Vitt U."/>
            <person name="Wingrove J."/>
            <person name="Camara F."/>
            <person name="Mar Alba M."/>
            <person name="Abril J.F."/>
            <person name="Guigo R."/>
            <person name="Smit A."/>
            <person name="Dubchak I."/>
            <person name="Rubin E.M."/>
            <person name="Couronne O."/>
            <person name="Poliakov A."/>
            <person name="Huebner N."/>
            <person name="Ganten D."/>
            <person name="Goesele C."/>
            <person name="Hummel O."/>
            <person name="Kreitler T."/>
            <person name="Lee Y.-A."/>
            <person name="Monti J."/>
            <person name="Schulz H."/>
            <person name="Zimdahl H."/>
            <person name="Himmelbauer H."/>
            <person name="Lehrach H."/>
            <person name="Jacob H.J."/>
            <person name="Bromberg S."/>
            <person name="Gullings-Handley J."/>
            <person name="Jensen-Seaman M.I."/>
            <person name="Kwitek A.E."/>
            <person name="Lazar J."/>
            <person name="Pasko D."/>
            <person name="Tonellato P.J."/>
            <person name="Twigger S."/>
            <person name="Ponting C.P."/>
            <person name="Duarte J.M."/>
            <person name="Rice S."/>
            <person name="Goodstadt L."/>
            <person name="Beatson S.A."/>
            <person name="Emes R.D."/>
            <person name="Winter E.E."/>
            <person name="Webber C."/>
            <person name="Brandt P."/>
            <person name="Nyakatura G."/>
            <person name="Adetobi M."/>
            <person name="Chiaromonte F."/>
            <person name="Elnitski L."/>
            <person name="Eswara P."/>
            <person name="Hardison R.C."/>
            <person name="Hou M."/>
            <person name="Kolbe D."/>
            <person name="Makova K."/>
            <person name="Miller W."/>
            <person name="Nekrutenko A."/>
            <person name="Riemer C."/>
            <person name="Schwartz S."/>
            <person name="Taylor J."/>
            <person name="Yang S."/>
            <person name="Zhang Y."/>
            <person name="Lindpaintner K."/>
            <person name="Andrews T.D."/>
            <person name="Caccamo M."/>
            <person name="Clamp M."/>
            <person name="Clarke L."/>
            <person name="Curwen V."/>
            <person name="Durbin R.M."/>
            <person name="Eyras E."/>
            <person name="Searle S.M."/>
            <person name="Cooper G.M."/>
            <person name="Batzoglou S."/>
            <person name="Brudno M."/>
            <person name="Sidow A."/>
            <person name="Stone E.A."/>
            <person name="Payseur B.A."/>
            <person name="Bourque G."/>
            <person name="Lopez-Otin C."/>
            <person name="Puente X.S."/>
            <person name="Chakrabarti K."/>
            <person name="Chatterji S."/>
            <person name="Dewey C."/>
            <person name="Pachter L."/>
            <person name="Bray N."/>
            <person name="Yap V.B."/>
            <person name="Caspi A."/>
            <person name="Tesler G."/>
            <person name="Pevzner P.A."/>
            <person name="Haussler D."/>
            <person name="Roskin K.M."/>
            <person name="Baertsch R."/>
            <person name="Clawson H."/>
            <person name="Furey T.S."/>
            <person name="Hinrichs A.S."/>
            <person name="Karolchik D."/>
            <person name="Kent W.J."/>
            <person name="Rosenbloom K.R."/>
            <person name="Trumbower H."/>
            <person name="Weirauch M."/>
            <person name="Cooper D.N."/>
            <person name="Stenson P.D."/>
            <person name="Ma B."/>
            <person name="Brent M."/>
            <person name="Arumugam M."/>
            <person name="Shteynberg D."/>
            <person name="Copley R.R."/>
            <person name="Taylor M.S."/>
            <person name="Riethman H."/>
            <person name="Mudunuri U."/>
            <person name="Peterson J."/>
            <person name="Guyer M."/>
            <person name="Felsenfeld A."/>
            <person name="Old S."/>
            <person name="Mockrin S."/>
            <person name="Collins F.S."/>
        </authorList>
    </citation>
    <scope>NUCLEOTIDE SEQUENCE [LARGE SCALE GENOMIC DNA]</scope>
    <source>
        <strain>Brown Norway</strain>
    </source>
</reference>
<reference key="2">
    <citation type="journal article" date="2004" name="Genome Res.">
        <title>The status, quality, and expansion of the NIH full-length cDNA project: the Mammalian Gene Collection (MGC).</title>
        <authorList>
            <consortium name="The MGC Project Team"/>
        </authorList>
    </citation>
    <scope>NUCLEOTIDE SEQUENCE [LARGE SCALE MRNA]</scope>
    <source>
        <tissue>Placenta</tissue>
    </source>
</reference>
<reference key="3">
    <citation type="submission" date="2007-04" db="UniProtKB">
        <authorList>
            <person name="Lubec G."/>
            <person name="Chen W.-Q."/>
        </authorList>
    </citation>
    <scope>PROTEIN SEQUENCE OF 103-128 AND 161-169</scope>
    <scope>IDENTIFICATION BY MASS SPECTROMETRY</scope>
    <source>
        <strain>Sprague-Dawley</strain>
        <tissue>Hippocampus</tissue>
    </source>
</reference>
<reference key="4">
    <citation type="journal article" date="2003" name="EMBO Rep.">
        <title>Identification of a family of endocytic proteins that define a new alpha-adaptin ear-binding motif.</title>
        <authorList>
            <person name="Ritter B."/>
            <person name="Philie J."/>
            <person name="Girard M."/>
            <person name="Tung E.C."/>
            <person name="Blondeau F."/>
            <person name="McPherson P.S."/>
        </authorList>
    </citation>
    <scope>SUBCELLULAR LOCATION</scope>
    <scope>TISSUE SPECIFICITY</scope>
    <scope>DOMAIN</scope>
    <scope>INTERACTION WITH AP1G1 AND AP2A1</scope>
</reference>
<reference key="5">
    <citation type="journal article" date="2004" name="J. Biol. Chem.">
        <title>Dual engagement regulation of protein interactions with the AP-2 adaptor alpha appendage.</title>
        <authorList>
            <person name="Mishra S.K."/>
            <person name="Hawryluk M.J."/>
            <person name="Brett T.J."/>
            <person name="Keyel P.A."/>
            <person name="Dupin A.L."/>
            <person name="Jha A."/>
            <person name="Heuser J.E."/>
            <person name="Fremont D.H."/>
            <person name="Traub L.M."/>
        </authorList>
    </citation>
    <scope>DOMAIN</scope>
    <scope>INTERACTION WITH AP2A2</scope>
</reference>
<reference key="6">
    <citation type="journal article" date="2012" name="Nat. Commun.">
        <title>Quantitative maps of protein phosphorylation sites across 14 different rat organs and tissues.</title>
        <authorList>
            <person name="Lundby A."/>
            <person name="Secher A."/>
            <person name="Lage K."/>
            <person name="Nordsborg N.B."/>
            <person name="Dmytriyev A."/>
            <person name="Lundby C."/>
            <person name="Olsen J.V."/>
        </authorList>
    </citation>
    <scope>IDENTIFICATION BY MASS SPECTROMETRY [LARGE SCALE ANALYSIS]</scope>
</reference>
<organism>
    <name type="scientific">Rattus norvegicus</name>
    <name type="common">Rat</name>
    <dbReference type="NCBI Taxonomy" id="10116"/>
    <lineage>
        <taxon>Eukaryota</taxon>
        <taxon>Metazoa</taxon>
        <taxon>Chordata</taxon>
        <taxon>Craniata</taxon>
        <taxon>Vertebrata</taxon>
        <taxon>Euteleostomi</taxon>
        <taxon>Mammalia</taxon>
        <taxon>Eutheria</taxon>
        <taxon>Euarchontoglires</taxon>
        <taxon>Glires</taxon>
        <taxon>Rodentia</taxon>
        <taxon>Myomorpha</taxon>
        <taxon>Muroidea</taxon>
        <taxon>Muridae</taxon>
        <taxon>Murinae</taxon>
        <taxon>Rattus</taxon>
    </lineage>
</organism>
<protein>
    <recommendedName>
        <fullName>Adaptin ear-binding coat-associated protein 1</fullName>
    </recommendedName>
    <alternativeName>
        <fullName>NECAP endocytosis-associated protein 1</fullName>
        <shortName>NECAP-1</shortName>
    </alternativeName>
</protein>
<proteinExistence type="evidence at protein level"/>
<gene>
    <name type="primary">Necap1</name>
</gene>
<dbReference type="EMBL" id="AABR03032682">
    <property type="status" value="NOT_ANNOTATED_CDS"/>
    <property type="molecule type" value="Genomic_DNA"/>
</dbReference>
<dbReference type="EMBL" id="BC097496">
    <property type="protein sequence ID" value="AAH97496.1"/>
    <property type="molecule type" value="mRNA"/>
</dbReference>
<dbReference type="RefSeq" id="NP_001025090.1">
    <property type="nucleotide sequence ID" value="NM_001029919.2"/>
</dbReference>
<dbReference type="SMR" id="P69682"/>
<dbReference type="BioGRID" id="300059">
    <property type="interactions" value="10"/>
</dbReference>
<dbReference type="DIP" id="DIP-44064N"/>
<dbReference type="FunCoup" id="P69682">
    <property type="interactions" value="3205"/>
</dbReference>
<dbReference type="IntAct" id="P69682">
    <property type="interactions" value="6"/>
</dbReference>
<dbReference type="MINT" id="P69682"/>
<dbReference type="STRING" id="10116.ENSRNOP00000013272"/>
<dbReference type="iPTMnet" id="P69682"/>
<dbReference type="PhosphoSitePlus" id="P69682"/>
<dbReference type="jPOST" id="P69682"/>
<dbReference type="PaxDb" id="10116-ENSRNOP00000013272"/>
<dbReference type="GeneID" id="312694"/>
<dbReference type="KEGG" id="rno:312694"/>
<dbReference type="UCSC" id="RGD:1306053">
    <property type="organism name" value="rat"/>
</dbReference>
<dbReference type="AGR" id="RGD:1306053"/>
<dbReference type="CTD" id="25977"/>
<dbReference type="RGD" id="1306053">
    <property type="gene designation" value="Necap1"/>
</dbReference>
<dbReference type="VEuPathDB" id="HostDB:ENSRNOG00000009236"/>
<dbReference type="eggNOG" id="KOG2500">
    <property type="taxonomic scope" value="Eukaryota"/>
</dbReference>
<dbReference type="HOGENOM" id="CLU_069884_1_1_1"/>
<dbReference type="InParanoid" id="P69682"/>
<dbReference type="OrthoDB" id="10265489at2759"/>
<dbReference type="PhylomeDB" id="P69682"/>
<dbReference type="TreeFam" id="TF314482"/>
<dbReference type="Reactome" id="R-RNO-432722">
    <property type="pathway name" value="Golgi Associated Vesicle Biogenesis"/>
</dbReference>
<dbReference type="Reactome" id="R-RNO-8856825">
    <property type="pathway name" value="Cargo recognition for clathrin-mediated endocytosis"/>
</dbReference>
<dbReference type="Reactome" id="R-RNO-8856828">
    <property type="pathway name" value="Clathrin-mediated endocytosis"/>
</dbReference>
<dbReference type="PRO" id="PR:P69682"/>
<dbReference type="Proteomes" id="UP000002494">
    <property type="component" value="Chromosome 4"/>
</dbReference>
<dbReference type="Bgee" id="ENSRNOG00000009236">
    <property type="expression patterns" value="Expressed in cerebellum and 19 other cell types or tissues"/>
</dbReference>
<dbReference type="GO" id="GO:0030125">
    <property type="term" value="C:clathrin vesicle coat"/>
    <property type="evidence" value="ECO:0000266"/>
    <property type="project" value="RGD"/>
</dbReference>
<dbReference type="GO" id="GO:0005905">
    <property type="term" value="C:clathrin-coated pit"/>
    <property type="evidence" value="ECO:0000266"/>
    <property type="project" value="RGD"/>
</dbReference>
<dbReference type="GO" id="GO:0005886">
    <property type="term" value="C:plasma membrane"/>
    <property type="evidence" value="ECO:0007669"/>
    <property type="project" value="UniProtKB-SubCell"/>
</dbReference>
<dbReference type="GO" id="GO:0098793">
    <property type="term" value="C:presynapse"/>
    <property type="evidence" value="ECO:0000314"/>
    <property type="project" value="SynGO"/>
</dbReference>
<dbReference type="GO" id="GO:0006897">
    <property type="term" value="P:endocytosis"/>
    <property type="evidence" value="ECO:0000266"/>
    <property type="project" value="RGD"/>
</dbReference>
<dbReference type="GO" id="GO:0140238">
    <property type="term" value="P:presynaptic endocytosis"/>
    <property type="evidence" value="ECO:0000314"/>
    <property type="project" value="SynGO"/>
</dbReference>
<dbReference type="GO" id="GO:0015031">
    <property type="term" value="P:protein transport"/>
    <property type="evidence" value="ECO:0007669"/>
    <property type="project" value="UniProtKB-KW"/>
</dbReference>
<dbReference type="GO" id="GO:0016192">
    <property type="term" value="P:vesicle-mediated transport"/>
    <property type="evidence" value="ECO:0000318"/>
    <property type="project" value="GO_Central"/>
</dbReference>
<dbReference type="CDD" id="cd13228">
    <property type="entry name" value="PHear_NECAP"/>
    <property type="match status" value="1"/>
</dbReference>
<dbReference type="FunFam" id="2.30.29.30:FF:000064">
    <property type="entry name" value="Adaptin ear-binding coat-associated protein 1"/>
    <property type="match status" value="1"/>
</dbReference>
<dbReference type="Gene3D" id="2.30.29.30">
    <property type="entry name" value="Pleckstrin-homology domain (PH domain)/Phosphotyrosine-binding domain (PTB)"/>
    <property type="match status" value="1"/>
</dbReference>
<dbReference type="InterPro" id="IPR012466">
    <property type="entry name" value="NECAP_PHear"/>
</dbReference>
<dbReference type="InterPro" id="IPR011993">
    <property type="entry name" value="PH-like_dom_sf"/>
</dbReference>
<dbReference type="PANTHER" id="PTHR12847:SF15">
    <property type="entry name" value="ADAPTIN EAR-BINDING COAT-ASSOCIATED PROTEIN 1"/>
    <property type="match status" value="1"/>
</dbReference>
<dbReference type="PANTHER" id="PTHR12847">
    <property type="entry name" value="ATP-BINDING CASSETTE ABC TRANSPORTER-RELATED"/>
    <property type="match status" value="1"/>
</dbReference>
<dbReference type="Pfam" id="PF07933">
    <property type="entry name" value="DUF1681"/>
    <property type="match status" value="1"/>
</dbReference>
<dbReference type="SUPFAM" id="SSF50729">
    <property type="entry name" value="PH domain-like"/>
    <property type="match status" value="1"/>
</dbReference>
<comment type="function">
    <text evidence="1">Involved in endocytosis.</text>
</comment>
<comment type="subunit">
    <text evidence="1 4 5">Interacts with AP1G1 and AP2A1 components of the adapter protein complexes AP-1 and AP-2. Interacts with the GAE domain proteins GGA1, GGA2 and GGA3 (By similarity). Interacts with AP2A2.</text>
</comment>
<comment type="interaction">
    <interactant intactId="EBI-7592718">
        <id>P69682</id>
    </interactant>
    <interactant intactId="EBI-7121510">
        <id>P49418</id>
        <label>AMPH</label>
    </interactant>
    <organismsDiffer>true</organismsDiffer>
    <experiments>3</experiments>
</comment>
<comment type="subcellular location">
    <subcellularLocation>
        <location evidence="4">Cytoplasmic vesicle</location>
        <location evidence="4">Clathrin-coated vesicle membrane</location>
    </subcellularLocation>
    <subcellularLocation>
        <location evidence="4">Cell membrane</location>
    </subcellularLocation>
    <text>Partially colocalizes with AP-2 at the plasma membrane.</text>
</comment>
<comment type="tissue specificity">
    <text evidence="4">Expressed predominantly in brain (at protein level).</text>
</comment>
<comment type="domain">
    <text evidence="4 5">The WXXF motifs mediate binding of accessory proteins to the ear-domain of AP-1, GGAs and AP-2 through hydrophobic interactions. Selective binding to the GAE domains of AP-1 or to the alpha-ear domain of AP-2 is tuned by the acidic context surrounding the motif and the properties of the second residue of the motif itself. The WXXF motif 1, which is preceded by an acidic residue and has a glycine in second position mediates specific interaction with AP-1. The WXXF motif 2, which is followed by the C-terminal carboxyl group negative charge, allows specific interaction with AP-2.</text>
</comment>
<comment type="similarity">
    <text evidence="6">Belongs to the NECAP family.</text>
</comment>
<feature type="chain" id="PRO_0000213070" description="Adaptin ear-binding coat-associated protein 1">
    <location>
        <begin position="1"/>
        <end position="277"/>
    </location>
</feature>
<feature type="region of interest" description="Disordered" evidence="3">
    <location>
        <begin position="164"/>
        <end position="277"/>
    </location>
</feature>
<feature type="short sequence motif" description="WXXF motif 1">
    <location>
        <begin position="254"/>
        <end position="257"/>
    </location>
</feature>
<feature type="short sequence motif" description="WXXF motif 2">
    <location>
        <begin position="274"/>
        <end position="277"/>
    </location>
</feature>
<feature type="compositionally biased region" description="Pro residues" evidence="3">
    <location>
        <begin position="187"/>
        <end position="201"/>
    </location>
</feature>
<feature type="compositionally biased region" description="Low complexity" evidence="3">
    <location>
        <begin position="222"/>
        <end position="234"/>
    </location>
</feature>
<feature type="compositionally biased region" description="Pro residues" evidence="3">
    <location>
        <begin position="235"/>
        <end position="245"/>
    </location>
</feature>
<feature type="compositionally biased region" description="Polar residues" evidence="3">
    <location>
        <begin position="258"/>
        <end position="277"/>
    </location>
</feature>
<feature type="modified residue" description="Phosphothreonine" evidence="2">
    <location>
        <position position="211"/>
    </location>
</feature>
<name>NECP1_RAT</name>
<keyword id="KW-1003">Cell membrane</keyword>
<keyword id="KW-0968">Cytoplasmic vesicle</keyword>
<keyword id="KW-0903">Direct protein sequencing</keyword>
<keyword id="KW-0254">Endocytosis</keyword>
<keyword id="KW-0472">Membrane</keyword>
<keyword id="KW-0597">Phosphoprotein</keyword>
<keyword id="KW-0653">Protein transport</keyword>
<keyword id="KW-1185">Reference proteome</keyword>
<keyword id="KW-0677">Repeat</keyword>
<keyword id="KW-0813">Transport</keyword>